<gene>
    <name evidence="1" type="primary">lepA</name>
    <name type="ordered locus">BPUM_2284</name>
</gene>
<comment type="function">
    <text evidence="1">Required for accurate and efficient protein synthesis under certain stress conditions. May act as a fidelity factor of the translation reaction, by catalyzing a one-codon backward translocation of tRNAs on improperly translocated ribosomes. Back-translocation proceeds from a post-translocation (POST) complex to a pre-translocation (PRE) complex, thus giving elongation factor G a second chance to translocate the tRNAs correctly. Binds to ribosomes in a GTP-dependent manner.</text>
</comment>
<comment type="catalytic activity">
    <reaction evidence="1">
        <text>GTP + H2O = GDP + phosphate + H(+)</text>
        <dbReference type="Rhea" id="RHEA:19669"/>
        <dbReference type="ChEBI" id="CHEBI:15377"/>
        <dbReference type="ChEBI" id="CHEBI:15378"/>
        <dbReference type="ChEBI" id="CHEBI:37565"/>
        <dbReference type="ChEBI" id="CHEBI:43474"/>
        <dbReference type="ChEBI" id="CHEBI:58189"/>
        <dbReference type="EC" id="3.6.5.n1"/>
    </reaction>
</comment>
<comment type="subcellular location">
    <subcellularLocation>
        <location evidence="1">Cell membrane</location>
        <topology evidence="1">Peripheral membrane protein</topology>
        <orientation evidence="1">Cytoplasmic side</orientation>
    </subcellularLocation>
</comment>
<comment type="similarity">
    <text evidence="1">Belongs to the TRAFAC class translation factor GTPase superfamily. Classic translation factor GTPase family. LepA subfamily.</text>
</comment>
<proteinExistence type="inferred from homology"/>
<feature type="chain" id="PRO_1000057470" description="Elongation factor 4">
    <location>
        <begin position="1"/>
        <end position="612"/>
    </location>
</feature>
<feature type="domain" description="tr-type G">
    <location>
        <begin position="12"/>
        <end position="194"/>
    </location>
</feature>
<feature type="binding site" evidence="1">
    <location>
        <begin position="24"/>
        <end position="29"/>
    </location>
    <ligand>
        <name>GTP</name>
        <dbReference type="ChEBI" id="CHEBI:37565"/>
    </ligand>
</feature>
<feature type="binding site" evidence="1">
    <location>
        <begin position="141"/>
        <end position="144"/>
    </location>
    <ligand>
        <name>GTP</name>
        <dbReference type="ChEBI" id="CHEBI:37565"/>
    </ligand>
</feature>
<reference key="1">
    <citation type="journal article" date="2007" name="PLoS ONE">
        <title>Paradoxical DNA repair and peroxide resistance gene conservation in Bacillus pumilus SAFR-032.</title>
        <authorList>
            <person name="Gioia J."/>
            <person name="Yerrapragada S."/>
            <person name="Qin X."/>
            <person name="Jiang H."/>
            <person name="Igboeli O.C."/>
            <person name="Muzny D."/>
            <person name="Dugan-Rocha S."/>
            <person name="Ding Y."/>
            <person name="Hawes A."/>
            <person name="Liu W."/>
            <person name="Perez L."/>
            <person name="Kovar C."/>
            <person name="Dinh H."/>
            <person name="Lee S."/>
            <person name="Nazareth L."/>
            <person name="Blyth P."/>
            <person name="Holder M."/>
            <person name="Buhay C."/>
            <person name="Tirumalai M.R."/>
            <person name="Liu Y."/>
            <person name="Dasgupta I."/>
            <person name="Bokhetache L."/>
            <person name="Fujita M."/>
            <person name="Karouia F."/>
            <person name="Eswara Moorthy P."/>
            <person name="Siefert J."/>
            <person name="Uzman A."/>
            <person name="Buzumbo P."/>
            <person name="Verma A."/>
            <person name="Zwiya H."/>
            <person name="McWilliams B.D."/>
            <person name="Olowu A."/>
            <person name="Clinkenbeard K.D."/>
            <person name="Newcombe D."/>
            <person name="Golebiewski L."/>
            <person name="Petrosino J.F."/>
            <person name="Nicholson W.L."/>
            <person name="Fox G.E."/>
            <person name="Venkateswaran K."/>
            <person name="Highlander S.K."/>
            <person name="Weinstock G.M."/>
        </authorList>
    </citation>
    <scope>NUCLEOTIDE SEQUENCE [LARGE SCALE GENOMIC DNA]</scope>
    <source>
        <strain>SAFR-032</strain>
    </source>
</reference>
<dbReference type="EC" id="3.6.5.n1" evidence="1"/>
<dbReference type="EMBL" id="CP000813">
    <property type="protein sequence ID" value="ABV62953.1"/>
    <property type="molecule type" value="Genomic_DNA"/>
</dbReference>
<dbReference type="RefSeq" id="WP_012010633.1">
    <property type="nucleotide sequence ID" value="NZ_VEIS01000005.1"/>
</dbReference>
<dbReference type="SMR" id="A8FFD6"/>
<dbReference type="STRING" id="315750.BPUM_2284"/>
<dbReference type="GeneID" id="5621550"/>
<dbReference type="KEGG" id="bpu:BPUM_2284"/>
<dbReference type="eggNOG" id="COG0481">
    <property type="taxonomic scope" value="Bacteria"/>
</dbReference>
<dbReference type="HOGENOM" id="CLU_009995_3_3_9"/>
<dbReference type="OrthoDB" id="9804431at2"/>
<dbReference type="Proteomes" id="UP000001355">
    <property type="component" value="Chromosome"/>
</dbReference>
<dbReference type="GO" id="GO:0005886">
    <property type="term" value="C:plasma membrane"/>
    <property type="evidence" value="ECO:0007669"/>
    <property type="project" value="UniProtKB-SubCell"/>
</dbReference>
<dbReference type="GO" id="GO:0005525">
    <property type="term" value="F:GTP binding"/>
    <property type="evidence" value="ECO:0007669"/>
    <property type="project" value="UniProtKB-UniRule"/>
</dbReference>
<dbReference type="GO" id="GO:0003924">
    <property type="term" value="F:GTPase activity"/>
    <property type="evidence" value="ECO:0007669"/>
    <property type="project" value="UniProtKB-UniRule"/>
</dbReference>
<dbReference type="GO" id="GO:0043022">
    <property type="term" value="F:ribosome binding"/>
    <property type="evidence" value="ECO:0007669"/>
    <property type="project" value="UniProtKB-UniRule"/>
</dbReference>
<dbReference type="GO" id="GO:0003746">
    <property type="term" value="F:translation elongation factor activity"/>
    <property type="evidence" value="ECO:0007669"/>
    <property type="project" value="UniProtKB-UniRule"/>
</dbReference>
<dbReference type="GO" id="GO:0045727">
    <property type="term" value="P:positive regulation of translation"/>
    <property type="evidence" value="ECO:0007669"/>
    <property type="project" value="UniProtKB-UniRule"/>
</dbReference>
<dbReference type="CDD" id="cd03699">
    <property type="entry name" value="EF4_II"/>
    <property type="match status" value="1"/>
</dbReference>
<dbReference type="CDD" id="cd16260">
    <property type="entry name" value="EF4_III"/>
    <property type="match status" value="1"/>
</dbReference>
<dbReference type="CDD" id="cd01890">
    <property type="entry name" value="LepA"/>
    <property type="match status" value="1"/>
</dbReference>
<dbReference type="CDD" id="cd03709">
    <property type="entry name" value="lepA_C"/>
    <property type="match status" value="1"/>
</dbReference>
<dbReference type="FunFam" id="3.40.50.300:FF:000078">
    <property type="entry name" value="Elongation factor 4"/>
    <property type="match status" value="1"/>
</dbReference>
<dbReference type="FunFam" id="2.40.30.10:FF:000015">
    <property type="entry name" value="Translation factor GUF1, mitochondrial"/>
    <property type="match status" value="1"/>
</dbReference>
<dbReference type="FunFam" id="3.30.70.240:FF:000007">
    <property type="entry name" value="Translation factor GUF1, mitochondrial"/>
    <property type="match status" value="1"/>
</dbReference>
<dbReference type="FunFam" id="3.30.70.2570:FF:000001">
    <property type="entry name" value="Translation factor GUF1, mitochondrial"/>
    <property type="match status" value="1"/>
</dbReference>
<dbReference type="FunFam" id="3.30.70.870:FF:000004">
    <property type="entry name" value="Translation factor GUF1, mitochondrial"/>
    <property type="match status" value="1"/>
</dbReference>
<dbReference type="Gene3D" id="3.30.70.240">
    <property type="match status" value="1"/>
</dbReference>
<dbReference type="Gene3D" id="3.30.70.2570">
    <property type="entry name" value="Elongation factor 4, C-terminal domain"/>
    <property type="match status" value="1"/>
</dbReference>
<dbReference type="Gene3D" id="3.30.70.870">
    <property type="entry name" value="Elongation Factor G (Translational Gtpase), domain 3"/>
    <property type="match status" value="1"/>
</dbReference>
<dbReference type="Gene3D" id="3.40.50.300">
    <property type="entry name" value="P-loop containing nucleotide triphosphate hydrolases"/>
    <property type="match status" value="1"/>
</dbReference>
<dbReference type="Gene3D" id="2.40.30.10">
    <property type="entry name" value="Translation factors"/>
    <property type="match status" value="1"/>
</dbReference>
<dbReference type="HAMAP" id="MF_00071">
    <property type="entry name" value="LepA"/>
    <property type="match status" value="1"/>
</dbReference>
<dbReference type="InterPro" id="IPR006297">
    <property type="entry name" value="EF-4"/>
</dbReference>
<dbReference type="InterPro" id="IPR035647">
    <property type="entry name" value="EFG_III/V"/>
</dbReference>
<dbReference type="InterPro" id="IPR000640">
    <property type="entry name" value="EFG_V-like"/>
</dbReference>
<dbReference type="InterPro" id="IPR004161">
    <property type="entry name" value="EFTu-like_2"/>
</dbReference>
<dbReference type="InterPro" id="IPR031157">
    <property type="entry name" value="G_TR_CS"/>
</dbReference>
<dbReference type="InterPro" id="IPR038363">
    <property type="entry name" value="LepA_C_sf"/>
</dbReference>
<dbReference type="InterPro" id="IPR013842">
    <property type="entry name" value="LepA_CTD"/>
</dbReference>
<dbReference type="InterPro" id="IPR035654">
    <property type="entry name" value="LepA_IV"/>
</dbReference>
<dbReference type="InterPro" id="IPR027417">
    <property type="entry name" value="P-loop_NTPase"/>
</dbReference>
<dbReference type="InterPro" id="IPR005225">
    <property type="entry name" value="Small_GTP-bd"/>
</dbReference>
<dbReference type="InterPro" id="IPR000795">
    <property type="entry name" value="T_Tr_GTP-bd_dom"/>
</dbReference>
<dbReference type="InterPro" id="IPR009000">
    <property type="entry name" value="Transl_B-barrel_sf"/>
</dbReference>
<dbReference type="NCBIfam" id="TIGR01393">
    <property type="entry name" value="lepA"/>
    <property type="match status" value="1"/>
</dbReference>
<dbReference type="NCBIfam" id="TIGR00231">
    <property type="entry name" value="small_GTP"/>
    <property type="match status" value="1"/>
</dbReference>
<dbReference type="PANTHER" id="PTHR43512:SF4">
    <property type="entry name" value="TRANSLATION FACTOR GUF1 HOMOLOG, CHLOROPLASTIC"/>
    <property type="match status" value="1"/>
</dbReference>
<dbReference type="PANTHER" id="PTHR43512">
    <property type="entry name" value="TRANSLATION FACTOR GUF1-RELATED"/>
    <property type="match status" value="1"/>
</dbReference>
<dbReference type="Pfam" id="PF00679">
    <property type="entry name" value="EFG_C"/>
    <property type="match status" value="1"/>
</dbReference>
<dbReference type="Pfam" id="PF00009">
    <property type="entry name" value="GTP_EFTU"/>
    <property type="match status" value="1"/>
</dbReference>
<dbReference type="Pfam" id="PF03144">
    <property type="entry name" value="GTP_EFTU_D2"/>
    <property type="match status" value="1"/>
</dbReference>
<dbReference type="Pfam" id="PF06421">
    <property type="entry name" value="LepA_C"/>
    <property type="match status" value="1"/>
</dbReference>
<dbReference type="PRINTS" id="PR00315">
    <property type="entry name" value="ELONGATNFCT"/>
</dbReference>
<dbReference type="SMART" id="SM00838">
    <property type="entry name" value="EFG_C"/>
    <property type="match status" value="1"/>
</dbReference>
<dbReference type="SUPFAM" id="SSF54980">
    <property type="entry name" value="EF-G C-terminal domain-like"/>
    <property type="match status" value="2"/>
</dbReference>
<dbReference type="SUPFAM" id="SSF52540">
    <property type="entry name" value="P-loop containing nucleoside triphosphate hydrolases"/>
    <property type="match status" value="1"/>
</dbReference>
<dbReference type="SUPFAM" id="SSF50447">
    <property type="entry name" value="Translation proteins"/>
    <property type="match status" value="1"/>
</dbReference>
<dbReference type="PROSITE" id="PS00301">
    <property type="entry name" value="G_TR_1"/>
    <property type="match status" value="1"/>
</dbReference>
<dbReference type="PROSITE" id="PS51722">
    <property type="entry name" value="G_TR_2"/>
    <property type="match status" value="1"/>
</dbReference>
<keyword id="KW-1003">Cell membrane</keyword>
<keyword id="KW-0342">GTP-binding</keyword>
<keyword id="KW-0378">Hydrolase</keyword>
<keyword id="KW-0472">Membrane</keyword>
<keyword id="KW-0547">Nucleotide-binding</keyword>
<keyword id="KW-0648">Protein biosynthesis</keyword>
<protein>
    <recommendedName>
        <fullName evidence="1">Elongation factor 4</fullName>
        <shortName evidence="1">EF-4</shortName>
        <ecNumber evidence="1">3.6.5.n1</ecNumber>
    </recommendedName>
    <alternativeName>
        <fullName evidence="1">Ribosomal back-translocase LepA</fullName>
    </alternativeName>
</protein>
<sequence>MTDKEKRLERQSRIRNFSIIAHIDHGKSTLADRILEKTAAITQREMKEQLLDSMDLERERGITIKLNSVQLKYKAKDGEEYIMHLIDTPGHVDFTYEVSRSLAACEGAILVVDAAQGIEAQTLANVYLALDNNLEILPIINKIDLPSAEPERVRGEIEDVIGLDASEAVLTSAKAGIGIEDILEQIVEKVPAPAGDPEAPLQALIFDSLYDAYRGVIAYIRIVEGTVKPGQKIKMMATGKEFEVLEVGVFTPKAMPTDELTVGDVGYLTAAIKNVGDTRVGDTITSAVNPAQEALPGYRKLNPMVYCGLYPIDTAKYNDLREALEKLELNDSSLQYEAETSQALGFGFRCGFLGMLHMEIIQERIEREFKIDLITTAPSVIYDVYMTDGEKIVVDNPSNLPDPQKIERIEEPYVKATMMVPNDYVGSVMELCQGKRGHFIDMQYLDANRVSIVYEIPLAEIVYEFFDQLKSNTKGYASFDYELIGYRPSTLVKMDIMLNGEKIDALSFIVHRDYAYERGKIIVDKLKELIPRQHFEVPIQAAIGQKIVARSTIKAMRKNVLAKCYGGDISRKRKLLEKQKEGKKRMKQVGSVEVPQEAFMAVLKMDDSTPKK</sequence>
<name>LEPA_BACP2</name>
<organism>
    <name type="scientific">Bacillus pumilus (strain SAFR-032)</name>
    <dbReference type="NCBI Taxonomy" id="315750"/>
    <lineage>
        <taxon>Bacteria</taxon>
        <taxon>Bacillati</taxon>
        <taxon>Bacillota</taxon>
        <taxon>Bacilli</taxon>
        <taxon>Bacillales</taxon>
        <taxon>Bacillaceae</taxon>
        <taxon>Bacillus</taxon>
    </lineage>
</organism>
<evidence type="ECO:0000255" key="1">
    <source>
        <dbReference type="HAMAP-Rule" id="MF_00071"/>
    </source>
</evidence>
<accession>A8FFD6</accession>